<feature type="chain" id="PRO_0000079847" description="Dimethyl sulfide dehydrogenase assembly chaperone protein">
    <location>
        <begin position="1"/>
        <end position="250"/>
    </location>
</feature>
<feature type="region of interest" description="Disordered" evidence="1">
    <location>
        <begin position="231"/>
        <end position="250"/>
    </location>
</feature>
<reference key="1">
    <citation type="journal article" date="2002" name="Mol. Microbiol.">
        <title>Molecular analysis of dimethyl sulphide dehydrogenase from Rhodovulum sulfidophilum: its place in the dimethyl sulphoxide reductase family of microbial molybdopterin-containing enzymes.</title>
        <authorList>
            <person name="McDevitt C.A."/>
            <person name="Hugenholtz P."/>
            <person name="Hanson G.R."/>
            <person name="McEwan A.G."/>
        </authorList>
    </citation>
    <scope>NUCLEOTIDE SEQUENCE [GENOMIC DNA]</scope>
    <source>
        <strain>SH1</strain>
    </source>
</reference>
<accession>Q8GPG2</accession>
<name>DDHD_RHOSU</name>
<comment type="function">
    <text>May function as a system-specific chaperone protein essential for the assembly of an active dimethyl sulfide dehydrogenase DdhABC.</text>
</comment>
<comment type="subcellular location">
    <subcellularLocation>
        <location evidence="2">Cytoplasm</location>
    </subcellularLocation>
</comment>
<comment type="similarity">
    <text evidence="2">Belongs to the type II DMSO reductase enzyme chaperone family.</text>
</comment>
<gene>
    <name type="primary">ddhD</name>
</gene>
<protein>
    <recommendedName>
        <fullName>Dimethyl sulfide dehydrogenase assembly chaperone protein</fullName>
    </recommendedName>
</protein>
<evidence type="ECO:0000256" key="1">
    <source>
        <dbReference type="SAM" id="MobiDB-lite"/>
    </source>
</evidence>
<evidence type="ECO:0000305" key="2"/>
<proteinExistence type="inferred from homology"/>
<organism>
    <name type="scientific">Rhodovulum sulfidophilum</name>
    <name type="common">Rhodobacter sulfidophilus</name>
    <dbReference type="NCBI Taxonomy" id="35806"/>
    <lineage>
        <taxon>Bacteria</taxon>
        <taxon>Pseudomonadati</taxon>
        <taxon>Pseudomonadota</taxon>
        <taxon>Alphaproteobacteria</taxon>
        <taxon>Rhodobacterales</taxon>
        <taxon>Paracoccaceae</taxon>
        <taxon>Rhodovulum</taxon>
    </lineage>
</organism>
<dbReference type="EMBL" id="AF453479">
    <property type="protein sequence ID" value="AAN46634.1"/>
    <property type="molecule type" value="Genomic_DNA"/>
</dbReference>
<dbReference type="STRING" id="35806.A6024_07045"/>
<dbReference type="eggNOG" id="COG3381">
    <property type="taxonomic scope" value="Bacteria"/>
</dbReference>
<dbReference type="GO" id="GO:0005737">
    <property type="term" value="C:cytoplasm"/>
    <property type="evidence" value="ECO:0007669"/>
    <property type="project" value="UniProtKB-SubCell"/>
</dbReference>
<dbReference type="Gene3D" id="1.10.3480.10">
    <property type="entry name" value="TorD-like"/>
    <property type="match status" value="1"/>
</dbReference>
<dbReference type="InterPro" id="IPR020945">
    <property type="entry name" value="DMSO/NO3_reduct_chaperone"/>
</dbReference>
<dbReference type="InterPro" id="IPR017843">
    <property type="entry name" value="DMSO_Rdtase_II_chaperone"/>
</dbReference>
<dbReference type="InterPro" id="IPR036411">
    <property type="entry name" value="TorD-like_sf"/>
</dbReference>
<dbReference type="NCBIfam" id="TIGR03482">
    <property type="entry name" value="DMSO_red_II_cha"/>
    <property type="match status" value="1"/>
</dbReference>
<dbReference type="Pfam" id="PF02613">
    <property type="entry name" value="Nitrate_red_del"/>
    <property type="match status" value="1"/>
</dbReference>
<dbReference type="SUPFAM" id="SSF89155">
    <property type="entry name" value="TorD-like"/>
    <property type="match status" value="1"/>
</dbReference>
<sequence>MTAQTCCPPTHDDALARARAGESLWRLGALAFGHPVEEFHRALLDGSFHEAVDAAWSALTGRPWPREAPPARFADLEAGYIAAFEHGRGGKRLASLLAGEHKDLLAGQAPPRLHAERRRFYRHFGLRQATADEGRVDEPDHLACLLEFMAVLSHLEAAAIVGGRDPGPVRRAARDFLVRYVEPMLALIAAVLRRPSEPPLDATLVRLTRDLHGFADSRIAELAAQVGPYRSAEARSDSAPDAAAHQNLWG</sequence>
<keyword id="KW-0143">Chaperone</keyword>
<keyword id="KW-0963">Cytoplasm</keyword>